<feature type="chain" id="PRO_0000071959" description="Slowpoke-binding protein">
    <location>
        <begin position="1"/>
        <end position="515"/>
    </location>
</feature>
<feature type="region of interest" description="Disordered" evidence="1">
    <location>
        <begin position="1"/>
        <end position="31"/>
    </location>
</feature>
<feature type="region of interest" description="Disordered" evidence="1">
    <location>
        <begin position="73"/>
        <end position="94"/>
    </location>
</feature>
<feature type="region of interest" description="Interaction with Slo">
    <location>
        <begin position="191"/>
        <end position="203"/>
    </location>
</feature>
<feature type="region of interest" description="Disordered" evidence="1">
    <location>
        <begin position="483"/>
        <end position="503"/>
    </location>
</feature>
<feature type="compositionally biased region" description="Polar residues" evidence="1">
    <location>
        <begin position="7"/>
        <end position="20"/>
    </location>
</feature>
<feature type="compositionally biased region" description="Polar residues" evidence="1">
    <location>
        <begin position="73"/>
        <end position="82"/>
    </location>
</feature>
<feature type="modified residue" description="Phosphoserine" evidence="2">
    <location>
        <position position="54"/>
    </location>
</feature>
<feature type="modified residue" description="Phosphoserine" evidence="2">
    <location>
        <position position="79"/>
    </location>
</feature>
<feature type="splice variant" id="VSP_010097" description="In isoform 2." evidence="6 7 8">
    <location>
        <begin position="410"/>
        <end position="413"/>
    </location>
</feature>
<feature type="mutagenesis site" description="Abolishes phosphorylation and interaction with 14-3-3-zeta; when associated with A-79." evidence="2">
    <original>S</original>
    <variation>A</variation>
    <location>
        <position position="54"/>
    </location>
</feature>
<feature type="mutagenesis site" description="Abolishes phosphorylation and interaction with 14-3-3-zeta; when associated with A-54." evidence="2">
    <original>S</original>
    <variation>A</variation>
    <location>
        <position position="79"/>
    </location>
</feature>
<feature type="sequence conflict" description="In Ref. 1; AAC06289." evidence="9" ref="1">
    <original>RI</original>
    <variation>PS</variation>
    <location>
        <begin position="12"/>
        <end position="13"/>
    </location>
</feature>
<feature type="sequence conflict" description="In Ref. 1; AAC06289." evidence="9" ref="1">
    <original>N</original>
    <variation>T</variation>
    <location>
        <position position="47"/>
    </location>
</feature>
<name>SLOB_DROME</name>
<organism>
    <name type="scientific">Drosophila melanogaster</name>
    <name type="common">Fruit fly</name>
    <dbReference type="NCBI Taxonomy" id="7227"/>
    <lineage>
        <taxon>Eukaryota</taxon>
        <taxon>Metazoa</taxon>
        <taxon>Ecdysozoa</taxon>
        <taxon>Arthropoda</taxon>
        <taxon>Hexapoda</taxon>
        <taxon>Insecta</taxon>
        <taxon>Pterygota</taxon>
        <taxon>Neoptera</taxon>
        <taxon>Endopterygota</taxon>
        <taxon>Diptera</taxon>
        <taxon>Brachycera</taxon>
        <taxon>Muscomorpha</taxon>
        <taxon>Ephydroidea</taxon>
        <taxon>Drosophilidae</taxon>
        <taxon>Drosophila</taxon>
        <taxon>Sophophora</taxon>
    </lineage>
</organism>
<dbReference type="EMBL" id="AF051162">
    <property type="protein sequence ID" value="AAC06289.1"/>
    <property type="molecule type" value="mRNA"/>
</dbReference>
<dbReference type="EMBL" id="AE014134">
    <property type="protein sequence ID" value="AAF52534.1"/>
    <property type="molecule type" value="Genomic_DNA"/>
</dbReference>
<dbReference type="EMBL" id="AE014134">
    <property type="protein sequence ID" value="AAN10635.1"/>
    <property type="status" value="ALT_SEQ"/>
    <property type="molecule type" value="Genomic_DNA"/>
</dbReference>
<dbReference type="EMBL" id="AE014134">
    <property type="protein sequence ID" value="ABC65880.1"/>
    <property type="molecule type" value="Genomic_DNA"/>
</dbReference>
<dbReference type="EMBL" id="BT021228">
    <property type="protein sequence ID" value="AAX33376.1"/>
    <property type="molecule type" value="mRNA"/>
</dbReference>
<dbReference type="EMBL" id="AY060721">
    <property type="protein sequence ID" value="AAL28269.1"/>
    <property type="status" value="ALT_FRAME"/>
    <property type="molecule type" value="mRNA"/>
</dbReference>
<dbReference type="RefSeq" id="NP_001033881.1">
    <molecule id="Q8IPH9-2"/>
    <property type="nucleotide sequence ID" value="NM_001038792.1"/>
</dbReference>
<dbReference type="RefSeq" id="NP_001188710.1">
    <molecule id="Q8IPH9-2"/>
    <property type="nucleotide sequence ID" value="NM_001201781.1"/>
</dbReference>
<dbReference type="RefSeq" id="NP_477349.1">
    <molecule id="Q8IPH9-1"/>
    <property type="nucleotide sequence ID" value="NM_058001.3"/>
</dbReference>
<dbReference type="RefSeq" id="NP_723292.1">
    <property type="nucleotide sequence ID" value="NM_164756.3"/>
</dbReference>
<dbReference type="RefSeq" id="NP_723293.1">
    <molecule id="Q8IPH9-1"/>
    <property type="nucleotide sequence ID" value="NM_164757.2"/>
</dbReference>
<dbReference type="SMR" id="Q8IPH9"/>
<dbReference type="BioGRID" id="60180">
    <property type="interactions" value="4"/>
</dbReference>
<dbReference type="ELM" id="Q8IPH9"/>
<dbReference type="FunCoup" id="Q8IPH9">
    <property type="interactions" value="113"/>
</dbReference>
<dbReference type="IntAct" id="Q8IPH9">
    <property type="interactions" value="4"/>
</dbReference>
<dbReference type="STRING" id="7227.FBpp0303549"/>
<dbReference type="iPTMnet" id="Q8IPH9"/>
<dbReference type="DNASU" id="34038"/>
<dbReference type="EnsemblMetazoa" id="FBtr0330697">
    <molecule id="Q8IPH9-1"/>
    <property type="protein sequence ID" value="FBpp0303540"/>
    <property type="gene ID" value="FBgn0264087"/>
</dbReference>
<dbReference type="EnsemblMetazoa" id="FBtr0330699">
    <molecule id="Q8IPH9-1"/>
    <property type="protein sequence ID" value="FBpp0303542"/>
    <property type="gene ID" value="FBgn0264087"/>
</dbReference>
<dbReference type="EnsemblMetazoa" id="FBtr0330700">
    <molecule id="Q8IPH9-2"/>
    <property type="protein sequence ID" value="FBpp0303543"/>
    <property type="gene ID" value="FBgn0264087"/>
</dbReference>
<dbReference type="EnsemblMetazoa" id="FBtr0330701">
    <molecule id="Q8IPH9-2"/>
    <property type="protein sequence ID" value="FBpp0303544"/>
    <property type="gene ID" value="FBgn0264087"/>
</dbReference>
<dbReference type="GeneID" id="34038"/>
<dbReference type="KEGG" id="dme:Dmel_CG43756"/>
<dbReference type="UCSC" id="CG6772-RD">
    <property type="organism name" value="d. melanogaster"/>
</dbReference>
<dbReference type="AGR" id="FB:FBgn0264087"/>
<dbReference type="CTD" id="34038"/>
<dbReference type="FlyBase" id="FBgn0264087">
    <property type="gene designation" value="Slob"/>
</dbReference>
<dbReference type="VEuPathDB" id="VectorBase:FBgn0264087"/>
<dbReference type="eggNOG" id="ENOG502QVVI">
    <property type="taxonomic scope" value="Eukaryota"/>
</dbReference>
<dbReference type="InParanoid" id="Q8IPH9"/>
<dbReference type="OMA" id="GIERTGW"/>
<dbReference type="OrthoDB" id="10045021at2759"/>
<dbReference type="PhylomeDB" id="Q8IPH9"/>
<dbReference type="BioGRID-ORCS" id="34038">
    <property type="hits" value="0 hits in 1 CRISPR screen"/>
</dbReference>
<dbReference type="GenomeRNAi" id="34038"/>
<dbReference type="PRO" id="PR:Q8IPH9"/>
<dbReference type="Proteomes" id="UP000000803">
    <property type="component" value="Chromosome 2L"/>
</dbReference>
<dbReference type="Bgee" id="FBgn0264087">
    <property type="expression patterns" value="Expressed in outer photoreceptor cell (Drosophila) in insect head and 162 other cell types or tissues"/>
</dbReference>
<dbReference type="ExpressionAtlas" id="Q8IPH9">
    <property type="expression patterns" value="baseline and differential"/>
</dbReference>
<dbReference type="GO" id="GO:0005737">
    <property type="term" value="C:cytoplasm"/>
    <property type="evidence" value="ECO:0000303"/>
    <property type="project" value="UniProtKB"/>
</dbReference>
<dbReference type="GO" id="GO:0045202">
    <property type="term" value="C:synapse"/>
    <property type="evidence" value="ECO:0007669"/>
    <property type="project" value="GOC"/>
</dbReference>
<dbReference type="GO" id="GO:0004672">
    <property type="term" value="F:protein kinase activity"/>
    <property type="evidence" value="ECO:0000314"/>
    <property type="project" value="FlyBase"/>
</dbReference>
<dbReference type="GO" id="GO:0050804">
    <property type="term" value="P:modulation of chemical synaptic transmission"/>
    <property type="evidence" value="ECO:0000303"/>
    <property type="project" value="UniProtKB"/>
</dbReference>
<dbReference type="GO" id="GO:0007274">
    <property type="term" value="P:neuromuscular synaptic transmission"/>
    <property type="evidence" value="ECO:0000315"/>
    <property type="project" value="FlyBase"/>
</dbReference>
<dbReference type="GO" id="GO:0042391">
    <property type="term" value="P:regulation of membrane potential"/>
    <property type="evidence" value="ECO:0000315"/>
    <property type="project" value="FlyBase"/>
</dbReference>
<dbReference type="GO" id="GO:0042594">
    <property type="term" value="P:response to starvation"/>
    <property type="evidence" value="ECO:0000315"/>
    <property type="project" value="FlyBase"/>
</dbReference>
<dbReference type="FunFam" id="1.10.510.10:FF:000908">
    <property type="entry name" value="Slowpoke binding protein, putative"/>
    <property type="match status" value="1"/>
</dbReference>
<dbReference type="Gene3D" id="3.30.200.20">
    <property type="entry name" value="Phosphorylase Kinase, domain 1"/>
    <property type="match status" value="1"/>
</dbReference>
<dbReference type="Gene3D" id="1.10.510.10">
    <property type="entry name" value="Transferase(Phosphotransferase) domain 1"/>
    <property type="match status" value="1"/>
</dbReference>
<dbReference type="InterPro" id="IPR011009">
    <property type="entry name" value="Kinase-like_dom_sf"/>
</dbReference>
<dbReference type="InterPro" id="IPR051837">
    <property type="entry name" value="SortingNexin/PXDomain-PKLike"/>
</dbReference>
<dbReference type="PANTHER" id="PTHR22999">
    <property type="entry name" value="PX SERINE/THREONINE KINASE PXK"/>
    <property type="match status" value="1"/>
</dbReference>
<dbReference type="PANTHER" id="PTHR22999:SF31">
    <property type="entry name" value="SLOWPOKE-BINDING PROTEIN"/>
    <property type="match status" value="1"/>
</dbReference>
<dbReference type="SUPFAM" id="SSF56112">
    <property type="entry name" value="Protein kinase-like (PK-like)"/>
    <property type="match status" value="1"/>
</dbReference>
<keyword id="KW-0025">Alternative splicing</keyword>
<keyword id="KW-0963">Cytoplasm</keyword>
<keyword id="KW-0597">Phosphoprotein</keyword>
<keyword id="KW-1185">Reference proteome</keyword>
<protein>
    <recommendedName>
        <fullName>Slowpoke-binding protein</fullName>
    </recommendedName>
</protein>
<evidence type="ECO:0000256" key="1">
    <source>
        <dbReference type="SAM" id="MobiDB-lite"/>
    </source>
</evidence>
<evidence type="ECO:0000269" key="2">
    <source>
    </source>
</evidence>
<evidence type="ECO:0000269" key="3">
    <source>
    </source>
</evidence>
<evidence type="ECO:0000269" key="4">
    <source>
    </source>
</evidence>
<evidence type="ECO:0000269" key="5">
    <source>
    </source>
</evidence>
<evidence type="ECO:0000303" key="6">
    <source>
    </source>
</evidence>
<evidence type="ECO:0000303" key="7">
    <source>
    </source>
</evidence>
<evidence type="ECO:0000303" key="8">
    <source ref="4"/>
</evidence>
<evidence type="ECO:0000305" key="9"/>
<sequence>MFKFNKAAQQQRIDNRNSAVTGHDPFVRPPVPEKKVRNIMKKLHKANGLKRSNSAIEFDVSALTAANRRQIYSSNRSASSEQDNSDLSEHSEKSPLVSARLDNLARLFFSKSMPAETGSRDTIDSVLTTRPNIKYQYSALDSGNGIVERSPRERAQREKALNATQEWIQGANGRYEVIAHLDEIGSRHGKNWFLVTDASVRTDRLQTLLPLPPDCVAFEDLPPNECAREILMELLGSLHHPYIYPVLDLGFLRNSSYNYACLVTPFNSRGSLKDLIYKAQWNEPWARKYTRKPNGLPVSQVQRLGRQILEALLFLKERGFPLHGHLHSGNVILQNGAARLSGLENGLLGLSSRINAVMWSRSVTEIENVDIVCFGHLLYEMCTGQELTTPKPSMRVLEMELQHYPQIGQTRKQILEILGLIFEPPSGVCPSVEDLVLCDLFRSIDLRELRGPCFSTIKPSLSRSTLNLLQAVKKRQCASLGHSLSEANSPCTPPSTPHDRRTGVLPAPYEVFRMY</sequence>
<comment type="function">
    <text evidence="5">Regulator of calcium-activated channel Slo. Increases or decreases the voltage sensitivity of Slo, depending on the absence or presence of 14-3-3-zeta in the complex, respectively.</text>
</comment>
<comment type="subunit">
    <text evidence="2 4 5">Interacts specifically with Slo; which activates Slo activity. Interacts with 14-3-3-zeta when phosphorylated. Forms a heterotetrameric complex containing phosphorylated Slob, Slo and 14-3-3-zeta, which represses Slo activity due to the indirect interaction between Slo and 14-3-3-zeta.</text>
</comment>
<comment type="interaction">
    <interactant intactId="EBI-142379">
        <id>Q8IPH9</id>
    </interactant>
    <interactant intactId="EBI-198100">
        <id>P29310</id>
        <label>14-3-3zeta</label>
    </interactant>
    <organismsDiffer>false</organismsDiffer>
    <experiments>4</experiments>
</comment>
<comment type="interaction">
    <interactant intactId="EBI-424896">
        <id>Q8IPH9-1</id>
    </interactant>
    <interactant intactId="EBI-426805">
        <id>Q03720</id>
        <label>slo</label>
    </interactant>
    <organismsDiffer>false</organismsDiffer>
    <experiments>2</experiments>
</comment>
<comment type="subcellular location">
    <subcellularLocation>
        <location evidence="9">Cytoplasm</location>
    </subcellularLocation>
    <text>Enriched in synaptic boutons.</text>
</comment>
<comment type="alternative products">
    <event type="alternative splicing"/>
    <isoform>
        <id>Q8IPH9-1</id>
        <name>1</name>
        <name>A</name>
        <sequence type="displayed"/>
    </isoform>
    <isoform>
        <id>Q8IPH9-2</id>
        <name>2</name>
        <name>D</name>
        <sequence type="described" ref="VSP_010097"/>
    </isoform>
</comment>
<comment type="tissue specificity">
    <text evidence="5">Expressed in head. In larval brain, it is expressed in the mushroom body. Also expressed in larval muscles.</text>
</comment>
<comment type="induction">
    <text evidence="3">Expressed with a circadian rhythm showing a peak at ZT15 (zeitgeber 15).</text>
</comment>
<comment type="PTM">
    <text evidence="2">Phosphorylated. Phosphorylation of Ser-54 and Ser-79 is required for the interaction with 14-3-3-zeta but not with that of Slo.</text>
</comment>
<comment type="sequence caution" evidence="9">
    <conflict type="frameshift">
        <sequence resource="EMBL-CDS" id="AAL28269"/>
    </conflict>
</comment>
<comment type="sequence caution" evidence="9">
    <conflict type="erroneous gene model prediction">
        <sequence resource="EMBL-CDS" id="AAN10635"/>
    </conflict>
</comment>
<proteinExistence type="evidence at protein level"/>
<reference key="1">
    <citation type="journal article" date="1998" name="Neuron">
        <title>Slob, a novel protein that interacts with the Slowpoke calcium-dependent potassium channel.</title>
        <authorList>
            <person name="Schopperle W.M."/>
            <person name="Holmqvist M.H."/>
            <person name="Zhou Y."/>
            <person name="Wang J."/>
            <person name="Wang Z."/>
            <person name="Griffith L.C."/>
            <person name="Keselman I."/>
            <person name="Kusinitz F."/>
            <person name="Dagan D."/>
            <person name="Levitan I.B."/>
        </authorList>
    </citation>
    <scope>NUCLEOTIDE SEQUENCE [MRNA] (ISOFORMS 1 AND 2)</scope>
    <scope>FUNCTION</scope>
    <scope>INTERACTION WITH SLO</scope>
    <scope>TISSUE SPECIFICITY</scope>
    <source>
        <strain>Canton-S</strain>
        <tissue>Head</tissue>
    </source>
</reference>
<reference key="2">
    <citation type="journal article" date="2000" name="Science">
        <title>The genome sequence of Drosophila melanogaster.</title>
        <authorList>
            <person name="Adams M.D."/>
            <person name="Celniker S.E."/>
            <person name="Holt R.A."/>
            <person name="Evans C.A."/>
            <person name="Gocayne J.D."/>
            <person name="Amanatides P.G."/>
            <person name="Scherer S.E."/>
            <person name="Li P.W."/>
            <person name="Hoskins R.A."/>
            <person name="Galle R.F."/>
            <person name="George R.A."/>
            <person name="Lewis S.E."/>
            <person name="Richards S."/>
            <person name="Ashburner M."/>
            <person name="Henderson S.N."/>
            <person name="Sutton G.G."/>
            <person name="Wortman J.R."/>
            <person name="Yandell M.D."/>
            <person name="Zhang Q."/>
            <person name="Chen L.X."/>
            <person name="Brandon R.C."/>
            <person name="Rogers Y.-H.C."/>
            <person name="Blazej R.G."/>
            <person name="Champe M."/>
            <person name="Pfeiffer B.D."/>
            <person name="Wan K.H."/>
            <person name="Doyle C."/>
            <person name="Baxter E.G."/>
            <person name="Helt G."/>
            <person name="Nelson C.R."/>
            <person name="Miklos G.L.G."/>
            <person name="Abril J.F."/>
            <person name="Agbayani A."/>
            <person name="An H.-J."/>
            <person name="Andrews-Pfannkoch C."/>
            <person name="Baldwin D."/>
            <person name="Ballew R.M."/>
            <person name="Basu A."/>
            <person name="Baxendale J."/>
            <person name="Bayraktaroglu L."/>
            <person name="Beasley E.M."/>
            <person name="Beeson K.Y."/>
            <person name="Benos P.V."/>
            <person name="Berman B.P."/>
            <person name="Bhandari D."/>
            <person name="Bolshakov S."/>
            <person name="Borkova D."/>
            <person name="Botchan M.R."/>
            <person name="Bouck J."/>
            <person name="Brokstein P."/>
            <person name="Brottier P."/>
            <person name="Burtis K.C."/>
            <person name="Busam D.A."/>
            <person name="Butler H."/>
            <person name="Cadieu E."/>
            <person name="Center A."/>
            <person name="Chandra I."/>
            <person name="Cherry J.M."/>
            <person name="Cawley S."/>
            <person name="Dahlke C."/>
            <person name="Davenport L.B."/>
            <person name="Davies P."/>
            <person name="de Pablos B."/>
            <person name="Delcher A."/>
            <person name="Deng Z."/>
            <person name="Mays A.D."/>
            <person name="Dew I."/>
            <person name="Dietz S.M."/>
            <person name="Dodson K."/>
            <person name="Doup L.E."/>
            <person name="Downes M."/>
            <person name="Dugan-Rocha S."/>
            <person name="Dunkov B.C."/>
            <person name="Dunn P."/>
            <person name="Durbin K.J."/>
            <person name="Evangelista C.C."/>
            <person name="Ferraz C."/>
            <person name="Ferriera S."/>
            <person name="Fleischmann W."/>
            <person name="Fosler C."/>
            <person name="Gabrielian A.E."/>
            <person name="Garg N.S."/>
            <person name="Gelbart W.M."/>
            <person name="Glasser K."/>
            <person name="Glodek A."/>
            <person name="Gong F."/>
            <person name="Gorrell J.H."/>
            <person name="Gu Z."/>
            <person name="Guan P."/>
            <person name="Harris M."/>
            <person name="Harris N.L."/>
            <person name="Harvey D.A."/>
            <person name="Heiman T.J."/>
            <person name="Hernandez J.R."/>
            <person name="Houck J."/>
            <person name="Hostin D."/>
            <person name="Houston K.A."/>
            <person name="Howland T.J."/>
            <person name="Wei M.-H."/>
            <person name="Ibegwam C."/>
            <person name="Jalali M."/>
            <person name="Kalush F."/>
            <person name="Karpen G.H."/>
            <person name="Ke Z."/>
            <person name="Kennison J.A."/>
            <person name="Ketchum K.A."/>
            <person name="Kimmel B.E."/>
            <person name="Kodira C.D."/>
            <person name="Kraft C.L."/>
            <person name="Kravitz S."/>
            <person name="Kulp D."/>
            <person name="Lai Z."/>
            <person name="Lasko P."/>
            <person name="Lei Y."/>
            <person name="Levitsky A.A."/>
            <person name="Li J.H."/>
            <person name="Li Z."/>
            <person name="Liang Y."/>
            <person name="Lin X."/>
            <person name="Liu X."/>
            <person name="Mattei B."/>
            <person name="McIntosh T.C."/>
            <person name="McLeod M.P."/>
            <person name="McPherson D."/>
            <person name="Merkulov G."/>
            <person name="Milshina N.V."/>
            <person name="Mobarry C."/>
            <person name="Morris J."/>
            <person name="Moshrefi A."/>
            <person name="Mount S.M."/>
            <person name="Moy M."/>
            <person name="Murphy B."/>
            <person name="Murphy L."/>
            <person name="Muzny D.M."/>
            <person name="Nelson D.L."/>
            <person name="Nelson D.R."/>
            <person name="Nelson K.A."/>
            <person name="Nixon K."/>
            <person name="Nusskern D.R."/>
            <person name="Pacleb J.M."/>
            <person name="Palazzolo M."/>
            <person name="Pittman G.S."/>
            <person name="Pan S."/>
            <person name="Pollard J."/>
            <person name="Puri V."/>
            <person name="Reese M.G."/>
            <person name="Reinert K."/>
            <person name="Remington K."/>
            <person name="Saunders R.D.C."/>
            <person name="Scheeler F."/>
            <person name="Shen H."/>
            <person name="Shue B.C."/>
            <person name="Siden-Kiamos I."/>
            <person name="Simpson M."/>
            <person name="Skupski M.P."/>
            <person name="Smith T.J."/>
            <person name="Spier E."/>
            <person name="Spradling A.C."/>
            <person name="Stapleton M."/>
            <person name="Strong R."/>
            <person name="Sun E."/>
            <person name="Svirskas R."/>
            <person name="Tector C."/>
            <person name="Turner R."/>
            <person name="Venter E."/>
            <person name="Wang A.H."/>
            <person name="Wang X."/>
            <person name="Wang Z.-Y."/>
            <person name="Wassarman D.A."/>
            <person name="Weinstock G.M."/>
            <person name="Weissenbach J."/>
            <person name="Williams S.M."/>
            <person name="Woodage T."/>
            <person name="Worley K.C."/>
            <person name="Wu D."/>
            <person name="Yang S."/>
            <person name="Yao Q.A."/>
            <person name="Ye J."/>
            <person name="Yeh R.-F."/>
            <person name="Zaveri J.S."/>
            <person name="Zhan M."/>
            <person name="Zhang G."/>
            <person name="Zhao Q."/>
            <person name="Zheng L."/>
            <person name="Zheng X.H."/>
            <person name="Zhong F.N."/>
            <person name="Zhong W."/>
            <person name="Zhou X."/>
            <person name="Zhu S.C."/>
            <person name="Zhu X."/>
            <person name="Smith H.O."/>
            <person name="Gibbs R.A."/>
            <person name="Myers E.W."/>
            <person name="Rubin G.M."/>
            <person name="Venter J.C."/>
        </authorList>
    </citation>
    <scope>NUCLEOTIDE SEQUENCE [LARGE SCALE GENOMIC DNA]</scope>
    <source>
        <strain>Berkeley</strain>
    </source>
</reference>
<reference key="3">
    <citation type="journal article" date="2002" name="Genome Biol.">
        <title>Annotation of the Drosophila melanogaster euchromatic genome: a systematic review.</title>
        <authorList>
            <person name="Misra S."/>
            <person name="Crosby M.A."/>
            <person name="Mungall C.J."/>
            <person name="Matthews B.B."/>
            <person name="Campbell K.S."/>
            <person name="Hradecky P."/>
            <person name="Huang Y."/>
            <person name="Kaminker J.S."/>
            <person name="Millburn G.H."/>
            <person name="Prochnik S.E."/>
            <person name="Smith C.D."/>
            <person name="Tupy J.L."/>
            <person name="Whitfield E.J."/>
            <person name="Bayraktaroglu L."/>
            <person name="Berman B.P."/>
            <person name="Bettencourt B.R."/>
            <person name="Celniker S.E."/>
            <person name="de Grey A.D.N.J."/>
            <person name="Drysdale R.A."/>
            <person name="Harris N.L."/>
            <person name="Richter J."/>
            <person name="Russo S."/>
            <person name="Schroeder A.J."/>
            <person name="Shu S.Q."/>
            <person name="Stapleton M."/>
            <person name="Yamada C."/>
            <person name="Ashburner M."/>
            <person name="Gelbart W.M."/>
            <person name="Rubin G.M."/>
            <person name="Lewis S.E."/>
        </authorList>
    </citation>
    <scope>GENOME REANNOTATION</scope>
    <scope>ALTERNATIVE SPLICING</scope>
    <source>
        <strain>Berkeley</strain>
    </source>
</reference>
<reference key="4">
    <citation type="submission" date="2005-03" db="EMBL/GenBank/DDBJ databases">
        <authorList>
            <person name="Stapleton M."/>
            <person name="Carlson J.W."/>
            <person name="Chavez C."/>
            <person name="Frise E."/>
            <person name="George R.A."/>
            <person name="Pacleb J.M."/>
            <person name="Park S."/>
            <person name="Wan K.H."/>
            <person name="Yu C."/>
            <person name="Rubin G.M."/>
            <person name="Celniker S.E."/>
        </authorList>
    </citation>
    <scope>NUCLEOTIDE SEQUENCE [LARGE SCALE MRNA] (ISOFORM 2)</scope>
    <source>
        <strain>Berkeley</strain>
        <tissue>Head</tissue>
    </source>
</reference>
<reference key="5">
    <citation type="journal article" date="2002" name="Genome Biol.">
        <title>A Drosophila full-length cDNA resource.</title>
        <authorList>
            <person name="Stapleton M."/>
            <person name="Carlson J.W."/>
            <person name="Brokstein P."/>
            <person name="Yu C."/>
            <person name="Champe M."/>
            <person name="George R.A."/>
            <person name="Guarin H."/>
            <person name="Kronmiller B."/>
            <person name="Pacleb J.M."/>
            <person name="Park S."/>
            <person name="Wan K.H."/>
            <person name="Rubin G.M."/>
            <person name="Celniker S.E."/>
        </authorList>
    </citation>
    <scope>NUCLEOTIDE SEQUENCE [LARGE SCALE MRNA] OF 118-515 (ISOFORM 2)</scope>
    <source>
        <strain>Berkeley</strain>
        <tissue>Head</tissue>
    </source>
</reference>
<reference key="6">
    <citation type="journal article" date="1999" name="Neuron">
        <title>A dynamically regulated 14-3-3, Slob, and Slowpoke potassium channel complex in Drosophila presynaptic nerve terminals.</title>
        <authorList>
            <person name="Zhou Y."/>
            <person name="Schopperle W.M."/>
            <person name="Murrey H."/>
            <person name="Jaramillo A."/>
            <person name="Dagan D."/>
            <person name="Griffith L.C."/>
            <person name="Levitan I.B."/>
        </authorList>
    </citation>
    <scope>INTERACTION WITH SLO AND 14-3-3-ZETA</scope>
    <scope>PHOSPHORYLATION AT SER-54 AND SER-79</scope>
    <scope>MUTAGENESIS OF SER-54 AND SER-79</scope>
</reference>
<reference key="7">
    <citation type="journal article" date="2001" name="Neuron">
        <title>Circadian regulation of gene expression systems in the Drosophila head.</title>
        <authorList>
            <person name="Claridge-Chang A."/>
            <person name="Wijnen H."/>
            <person name="Naef F."/>
            <person name="Boothroyd C."/>
            <person name="Rajewsky N."/>
            <person name="Young M.W."/>
        </authorList>
    </citation>
    <scope>INDUCTION</scope>
</reference>
<reference key="8">
    <citation type="journal article" date="2003" name="Neuropharmacology">
        <title>An interaction domain in Slob necessary for its binding to the slowpoke calcium-dependent potassium channel.</title>
        <authorList>
            <person name="Zhou Y."/>
            <person name="Fei H."/>
            <person name="Levitan I.B."/>
        </authorList>
    </citation>
    <scope>INTERACTION WITH SLO</scope>
</reference>
<gene>
    <name type="primary">Slob</name>
    <name type="ORF">CG43756</name>
</gene>
<accession>Q8IPH9</accession>
<accession>O61564</accession>
<accession>Q5BIJ6</accession>
<accession>Q95SL3</accession>
<accession>Q9VLZ4</accession>